<evidence type="ECO:0000250" key="1">
    <source>
        <dbReference type="UniProtKB" id="Q4WAW7"/>
    </source>
</evidence>
<evidence type="ECO:0000250" key="2">
    <source>
        <dbReference type="UniProtKB" id="Q50EL0"/>
    </source>
</evidence>
<evidence type="ECO:0000269" key="3">
    <source>
    </source>
</evidence>
<evidence type="ECO:0000269" key="4">
    <source>
    </source>
</evidence>
<evidence type="ECO:0000269" key="5">
    <source>
    </source>
</evidence>
<evidence type="ECO:0000303" key="6">
    <source>
    </source>
</evidence>
<evidence type="ECO:0000303" key="7">
    <source>
    </source>
</evidence>
<evidence type="ECO:0000305" key="8"/>
<gene>
    <name type="primary">etpPT</name>
    <name type="ORF">AFUA_3G12930</name>
</gene>
<name>7DMAW_ASPFU</name>
<dbReference type="EC" id="2.5.1.80" evidence="3 4"/>
<dbReference type="EC" id="3.4.11.17" evidence="5"/>
<dbReference type="EMBL" id="EF539173">
    <property type="protein sequence ID" value="ABS89001.1"/>
    <property type="molecule type" value="mRNA"/>
</dbReference>
<dbReference type="EMBL" id="AAHF01000002">
    <property type="protein sequence ID" value="EAL92290.2"/>
    <property type="molecule type" value="Genomic_DNA"/>
</dbReference>
<dbReference type="RefSeq" id="XP_754328.2">
    <property type="nucleotide sequence ID" value="XM_749235.2"/>
</dbReference>
<dbReference type="SMR" id="Q4WYG3"/>
<dbReference type="STRING" id="330879.Q4WYG3"/>
<dbReference type="MEROPS" id="M77.001"/>
<dbReference type="EnsemblFungi" id="EAL92290">
    <property type="protein sequence ID" value="EAL92290"/>
    <property type="gene ID" value="AFUA_3G12930"/>
</dbReference>
<dbReference type="GeneID" id="3512456"/>
<dbReference type="KEGG" id="afm:AFUA_3G12930"/>
<dbReference type="VEuPathDB" id="FungiDB:Afu3g12930"/>
<dbReference type="eggNOG" id="ENOG502S2XP">
    <property type="taxonomic scope" value="Eukaryota"/>
</dbReference>
<dbReference type="HOGENOM" id="CLU_037431_2_2_1"/>
<dbReference type="InParanoid" id="Q4WYG3"/>
<dbReference type="OMA" id="HMTTNTI"/>
<dbReference type="OrthoDB" id="3354387at2759"/>
<dbReference type="BioCyc" id="MetaCyc:MONOMER-15368"/>
<dbReference type="BRENDA" id="2.5.1.80">
    <property type="organism ID" value="508"/>
</dbReference>
<dbReference type="Proteomes" id="UP000002530">
    <property type="component" value="Chromosome 3"/>
</dbReference>
<dbReference type="GO" id="GO:0004177">
    <property type="term" value="F:aminopeptidase activity"/>
    <property type="evidence" value="ECO:0007669"/>
    <property type="project" value="UniProtKB-KW"/>
</dbReference>
<dbReference type="GO" id="GO:0004161">
    <property type="term" value="F:dimethylallyltranstransferase activity"/>
    <property type="evidence" value="ECO:0000314"/>
    <property type="project" value="AspGD"/>
</dbReference>
<dbReference type="GO" id="GO:0008233">
    <property type="term" value="F:peptidase activity"/>
    <property type="evidence" value="ECO:0000314"/>
    <property type="project" value="AspGD"/>
</dbReference>
<dbReference type="GO" id="GO:0004659">
    <property type="term" value="F:prenyltransferase activity"/>
    <property type="evidence" value="ECO:0000314"/>
    <property type="project" value="AspGD"/>
</dbReference>
<dbReference type="GO" id="GO:0009821">
    <property type="term" value="P:alkaloid biosynthetic process"/>
    <property type="evidence" value="ECO:0000314"/>
    <property type="project" value="AspGD"/>
</dbReference>
<dbReference type="GO" id="GO:0006508">
    <property type="term" value="P:proteolysis"/>
    <property type="evidence" value="ECO:0007669"/>
    <property type="project" value="UniProtKB-KW"/>
</dbReference>
<dbReference type="GO" id="GO:0044550">
    <property type="term" value="P:secondary metabolite biosynthetic process"/>
    <property type="evidence" value="ECO:0000314"/>
    <property type="project" value="AspGD"/>
</dbReference>
<dbReference type="CDD" id="cd13929">
    <property type="entry name" value="PT-DMATS_CymD"/>
    <property type="match status" value="1"/>
</dbReference>
<dbReference type="InterPro" id="IPR033964">
    <property type="entry name" value="Aro_prenylTrfase"/>
</dbReference>
<dbReference type="InterPro" id="IPR017795">
    <property type="entry name" value="Aro_prenylTrfase_DMATS"/>
</dbReference>
<dbReference type="InterPro" id="IPR012148">
    <property type="entry name" value="DMATS-type_fun"/>
</dbReference>
<dbReference type="NCBIfam" id="TIGR03429">
    <property type="entry name" value="arom_pren_DMATS"/>
    <property type="match status" value="1"/>
</dbReference>
<dbReference type="PANTHER" id="PTHR40627">
    <property type="entry name" value="INDOLE PRENYLTRANSFERASE TDIB-RELATED"/>
    <property type="match status" value="1"/>
</dbReference>
<dbReference type="PANTHER" id="PTHR40627:SF3">
    <property type="entry name" value="PRENYLTRANSFERASE ASQH2-RELATED"/>
    <property type="match status" value="1"/>
</dbReference>
<dbReference type="Pfam" id="PF11991">
    <property type="entry name" value="Trp_DMAT"/>
    <property type="match status" value="1"/>
</dbReference>
<dbReference type="PIRSF" id="PIRSF000509">
    <property type="entry name" value="Trp_DMAT"/>
    <property type="match status" value="1"/>
</dbReference>
<dbReference type="SFLD" id="SFLDS00036">
    <property type="entry name" value="Aromatic_Prenyltransferase"/>
    <property type="match status" value="1"/>
</dbReference>
<dbReference type="SFLD" id="SFLDG01162">
    <property type="entry name" value="I"/>
    <property type="match status" value="1"/>
</dbReference>
<comment type="function">
    <text evidence="3 4 5">Catalyzes the prenylation of L-tryptophan at the C-7 position of the indole moiety. The enzyme is specific for dimethylallyl diphosphate (DMAPP) as prenyl donor. Also accepts D-tryptophan, typtophan-derivatives with modifications at the side chain or the indole ring, and linear and cyclic dipeptides such as H-L-Trp-L-Gly-OH or cyclo-L-Trp-L-Gly as substrates, however with lower efficiency. Also has tryptophan aminopeptidase activity towards linear peptides with a tryptophanyl moiety at the N-terminus. Dipeptides are better substrates than peptides with 3 or more amino acids. Enzymatic rate constants however are much higher for the prenyltransferase activity than for the aminopeptidase activity.</text>
</comment>
<comment type="catalytic activity">
    <reaction evidence="3 4">
        <text>L-tryptophan + dimethylallyl diphosphate = 7-(3-methylbut-2-enyl)-L-tryptophan + diphosphate</text>
        <dbReference type="Rhea" id="RHEA:30563"/>
        <dbReference type="ChEBI" id="CHEBI:33019"/>
        <dbReference type="ChEBI" id="CHEBI:57623"/>
        <dbReference type="ChEBI" id="CHEBI:57912"/>
        <dbReference type="ChEBI" id="CHEBI:62497"/>
        <dbReference type="EC" id="2.5.1.80"/>
    </reaction>
</comment>
<comment type="catalytic activity">
    <reaction evidence="5">
        <text>an N-terminal L-tryptophanyl-L-alpha-aminoacyl-[peptide] + H2O = an N-terminal L-alpha-aminoacyl-[peptide] + L-tryptophan</text>
        <dbReference type="Rhea" id="RHEA:72999"/>
        <dbReference type="Rhea" id="RHEA-COMP:9780"/>
        <dbReference type="Rhea" id="RHEA-COMP:18174"/>
        <dbReference type="ChEBI" id="CHEBI:15377"/>
        <dbReference type="ChEBI" id="CHEBI:57912"/>
        <dbReference type="ChEBI" id="CHEBI:78597"/>
        <dbReference type="ChEBI" id="CHEBI:192694"/>
        <dbReference type="EC" id="3.4.11.17"/>
    </reaction>
    <physiologicalReaction direction="left-to-right" evidence="5">
        <dbReference type="Rhea" id="RHEA:73000"/>
    </physiologicalReaction>
</comment>
<comment type="biophysicochemical properties">
    <kinetics>
        <KM evidence="3">67 uM for dimethylallyl diphosphate</KM>
        <KM evidence="3">137 uM for L-tryptophan</KM>
        <KM evidence="5">350 uM for H-L-Trp-L-Gly-OH (for aminopeptidase activity)</KM>
        <Vmax evidence="3">0.21 umol/min/mg enzyme</Vmax>
    </kinetics>
</comment>
<comment type="similarity">
    <text evidence="8">Belongs to the tryptophan dimethylallyltransferase family.</text>
</comment>
<protein>
    <recommendedName>
        <fullName evidence="6">7-dimethylallyltryptophan synthase</fullName>
        <shortName evidence="6">7-DMATS</shortName>
        <ecNumber evidence="3 4">2.5.1.80</ecNumber>
    </recommendedName>
    <alternativeName>
        <fullName evidence="7">Tryptophan aminopeptidase</fullName>
        <ecNumber evidence="5">3.4.11.17</ecNumber>
    </alternativeName>
</protein>
<accession>Q4WYG3</accession>
<accession>A8JY03</accession>
<organism>
    <name type="scientific">Aspergillus fumigatus (strain ATCC MYA-4609 / CBS 101355 / FGSC A1100 / Af293)</name>
    <name type="common">Neosartorya fumigata</name>
    <dbReference type="NCBI Taxonomy" id="330879"/>
    <lineage>
        <taxon>Eukaryota</taxon>
        <taxon>Fungi</taxon>
        <taxon>Dikarya</taxon>
        <taxon>Ascomycota</taxon>
        <taxon>Pezizomycotina</taxon>
        <taxon>Eurotiomycetes</taxon>
        <taxon>Eurotiomycetidae</taxon>
        <taxon>Eurotiales</taxon>
        <taxon>Aspergillaceae</taxon>
        <taxon>Aspergillus</taxon>
        <taxon>Aspergillus subgen. Fumigati</taxon>
    </lineage>
</organism>
<feature type="chain" id="PRO_0000418541" description="7-dimethylallyltryptophan synthase">
    <location>
        <begin position="1"/>
        <end position="472"/>
    </location>
</feature>
<feature type="binding site" evidence="2">
    <location>
        <position position="138"/>
    </location>
    <ligand>
        <name>L-tryptophan</name>
        <dbReference type="ChEBI" id="CHEBI:57912"/>
    </ligand>
</feature>
<feature type="binding site" evidence="1">
    <location>
        <position position="154"/>
    </location>
    <ligand>
        <name>dimethylallyl diphosphate</name>
        <dbReference type="ChEBI" id="CHEBI:57623"/>
    </ligand>
</feature>
<feature type="binding site" evidence="1">
    <location>
        <position position="239"/>
    </location>
    <ligand>
        <name>dimethylallyl diphosphate</name>
        <dbReference type="ChEBI" id="CHEBI:57623"/>
    </ligand>
</feature>
<feature type="binding site" evidence="1">
    <location>
        <position position="241"/>
    </location>
    <ligand>
        <name>dimethylallyl diphosphate</name>
        <dbReference type="ChEBI" id="CHEBI:57623"/>
    </ligand>
</feature>
<feature type="binding site" evidence="1">
    <location>
        <position position="313"/>
    </location>
    <ligand>
        <name>dimethylallyl diphosphate</name>
        <dbReference type="ChEBI" id="CHEBI:57623"/>
    </ligand>
</feature>
<feature type="binding site" evidence="1">
    <location>
        <position position="315"/>
    </location>
    <ligand>
        <name>dimethylallyl diphosphate</name>
        <dbReference type="ChEBI" id="CHEBI:57623"/>
    </ligand>
</feature>
<feature type="binding site" evidence="1">
    <location>
        <position position="393"/>
    </location>
    <ligand>
        <name>dimethylallyl diphosphate</name>
        <dbReference type="ChEBI" id="CHEBI:57623"/>
    </ligand>
</feature>
<feature type="binding site" evidence="1">
    <location>
        <position position="460"/>
    </location>
    <ligand>
        <name>dimethylallyl diphosphate</name>
        <dbReference type="ChEBI" id="CHEBI:57623"/>
    </ligand>
</feature>
<feature type="binding site" evidence="1">
    <location>
        <position position="464"/>
    </location>
    <ligand>
        <name>dimethylallyl diphosphate</name>
        <dbReference type="ChEBI" id="CHEBI:57623"/>
    </ligand>
</feature>
<feature type="site" description="Required for regioselectivity" evidence="1">
    <location>
        <position position="156"/>
    </location>
</feature>
<feature type="sequence variant" description="In strain: B5233 / ATCC 13073.">
    <original>P</original>
    <variation>Q</variation>
    <location>
        <position position="15"/>
    </location>
</feature>
<feature type="sequence variant" description="In strain: B5233 / ATCC 13073.">
    <original>E</original>
    <variation>G</variation>
    <location>
        <position position="271"/>
    </location>
</feature>
<proteinExistence type="evidence at protein level"/>
<reference key="1">
    <citation type="journal article" date="2007" name="Microbiology">
        <title>A 7-dimethylallyltryptophan synthase from Aspergillus fumigatus: overproduction, purification and biochemical characterization.</title>
        <authorList>
            <person name="Kremer A."/>
            <person name="Westrich L."/>
            <person name="Li S.-M."/>
        </authorList>
    </citation>
    <scope>NUCLEOTIDE SEQUENCE [MRNA]</scope>
    <scope>FUNCTION</scope>
    <scope>CATALYTIC ACTIVITY</scope>
    <scope>BIOPHYSICOCHEMICAL PROPERTIES</scope>
    <source>
        <strain>B5233 / ATCC 13073</strain>
    </source>
</reference>
<reference key="2">
    <citation type="journal article" date="2005" name="Nature">
        <title>Genomic sequence of the pathogenic and allergenic filamentous fungus Aspergillus fumigatus.</title>
        <authorList>
            <person name="Nierman W.C."/>
            <person name="Pain A."/>
            <person name="Anderson M.J."/>
            <person name="Wortman J.R."/>
            <person name="Kim H.S."/>
            <person name="Arroyo J."/>
            <person name="Berriman M."/>
            <person name="Abe K."/>
            <person name="Archer D.B."/>
            <person name="Bermejo C."/>
            <person name="Bennett J.W."/>
            <person name="Bowyer P."/>
            <person name="Chen D."/>
            <person name="Collins M."/>
            <person name="Coulsen R."/>
            <person name="Davies R."/>
            <person name="Dyer P.S."/>
            <person name="Farman M.L."/>
            <person name="Fedorova N."/>
            <person name="Fedorova N.D."/>
            <person name="Feldblyum T.V."/>
            <person name="Fischer R."/>
            <person name="Fosker N."/>
            <person name="Fraser A."/>
            <person name="Garcia J.L."/>
            <person name="Garcia M.J."/>
            <person name="Goble A."/>
            <person name="Goldman G.H."/>
            <person name="Gomi K."/>
            <person name="Griffith-Jones S."/>
            <person name="Gwilliam R."/>
            <person name="Haas B.J."/>
            <person name="Haas H."/>
            <person name="Harris D.E."/>
            <person name="Horiuchi H."/>
            <person name="Huang J."/>
            <person name="Humphray S."/>
            <person name="Jimenez J."/>
            <person name="Keller N."/>
            <person name="Khouri H."/>
            <person name="Kitamoto K."/>
            <person name="Kobayashi T."/>
            <person name="Konzack S."/>
            <person name="Kulkarni R."/>
            <person name="Kumagai T."/>
            <person name="Lafton A."/>
            <person name="Latge J.-P."/>
            <person name="Li W."/>
            <person name="Lord A."/>
            <person name="Lu C."/>
            <person name="Majoros W.H."/>
            <person name="May G.S."/>
            <person name="Miller B.L."/>
            <person name="Mohamoud Y."/>
            <person name="Molina M."/>
            <person name="Monod M."/>
            <person name="Mouyna I."/>
            <person name="Mulligan S."/>
            <person name="Murphy L.D."/>
            <person name="O'Neil S."/>
            <person name="Paulsen I."/>
            <person name="Penalva M.A."/>
            <person name="Pertea M."/>
            <person name="Price C."/>
            <person name="Pritchard B.L."/>
            <person name="Quail M.A."/>
            <person name="Rabbinowitsch E."/>
            <person name="Rawlins N."/>
            <person name="Rajandream M.A."/>
            <person name="Reichard U."/>
            <person name="Renauld H."/>
            <person name="Robson G.D."/>
            <person name="Rodriguez de Cordoba S."/>
            <person name="Rodriguez-Pena J.M."/>
            <person name="Ronning C.M."/>
            <person name="Rutter S."/>
            <person name="Salzberg S.L."/>
            <person name="Sanchez M."/>
            <person name="Sanchez-Ferrero J.C."/>
            <person name="Saunders D."/>
            <person name="Seeger K."/>
            <person name="Squares R."/>
            <person name="Squares S."/>
            <person name="Takeuchi M."/>
            <person name="Tekaia F."/>
            <person name="Turner G."/>
            <person name="Vazquez de Aldana C.R."/>
            <person name="Weidman J."/>
            <person name="White O."/>
            <person name="Woodward J.R."/>
            <person name="Yu J.-H."/>
            <person name="Fraser C.M."/>
            <person name="Galagan J.E."/>
            <person name="Asai K."/>
            <person name="Machida M."/>
            <person name="Hall N."/>
            <person name="Barrell B.G."/>
            <person name="Denning D.W."/>
        </authorList>
    </citation>
    <scope>NUCLEOTIDE SEQUENCE [LARGE SCALE GENOMIC DNA]</scope>
    <source>
        <strain>ATCC MYA-4609 / CBS 101355 / FGSC A1100 / Af293</strain>
    </source>
</reference>
<reference key="3">
    <citation type="journal article" date="2008" name="Appl. Microbiol. Biotechnol.">
        <title>Potential of a 7-dimethylallyltryptophan synthase as a tool for production of prenylated indole derivatives.</title>
        <authorList>
            <person name="Kremer A."/>
            <person name="Li S.-M."/>
        </authorList>
    </citation>
    <scope>FUNCTION</scope>
    <scope>CATALYTIC ACTIVITY</scope>
    <scope>SUBSTRATE SPECIFICITY</scope>
</reference>
<reference key="4">
    <citation type="journal article" date="2008" name="Chem. Biol.">
        <title>Tryptophan aminopeptidase activity of several indole prenyltransferases from Aspergillus fumigatus.</title>
        <authorList>
            <person name="Kremer A."/>
            <person name="Li S.-M."/>
        </authorList>
    </citation>
    <scope>FUNCTION</scope>
    <scope>CATALYTIC ACTIVITY</scope>
    <scope>BIOPHYSICOCHEMICAL PROPERTIES</scope>
    <scope>SUBSTRATE SPECIFICITY</scope>
</reference>
<sequence length="472" mass="52688">MSIGAEIDSLVPAPPGLNGTAAGYPAKTQKELSNGDFDAHDGLSLAQLTPYDVLTAALPLPAPASSTGFWWRETGPVMSKLLAKANYPLYTHYKYLMLYHTHILPLLGPRPPLENSTHPSPSNAPWRSFLTDDFTPLEPSWNVNGNSEAQSTIRLGIEPIGFEAGAAADPFNQAAVTQFMHSYEATEVGATLTLFEHFRNDMFVGPETYAALRAKIPEGEHTTQSFLAFDLDAGRVTTKAYFFPILMSLKTGQSTTKVVSDSILHLALKSEVWGVQTIAAMSVMEAWIGSYGGAAKTEMISVDCVNEADSRIKIYVRMPHTSLRKVKEAYCLGGRLTDENTKEGLKLLDELWRTVFGIDDEDAELPQNSHRTAGTIFNFELRPGKWFPEPKVYLPVRHYCESDMQIASRLQTFFGRLGWHNMEKDYCKHLEDLFPHHPLSSSTGTHTFLSFSYKKQKGVYMTMYYNLRVYST</sequence>
<keyword id="KW-0031">Aminopeptidase</keyword>
<keyword id="KW-0378">Hydrolase</keyword>
<keyword id="KW-0645">Protease</keyword>
<keyword id="KW-1185">Reference proteome</keyword>
<keyword id="KW-0808">Transferase</keyword>